<name>SYFB_STAAM</name>
<keyword id="KW-0030">Aminoacyl-tRNA synthetase</keyword>
<keyword id="KW-0067">ATP-binding</keyword>
<keyword id="KW-0963">Cytoplasm</keyword>
<keyword id="KW-0436">Ligase</keyword>
<keyword id="KW-0460">Magnesium</keyword>
<keyword id="KW-0479">Metal-binding</keyword>
<keyword id="KW-0547">Nucleotide-binding</keyword>
<keyword id="KW-0648">Protein biosynthesis</keyword>
<keyword id="KW-0694">RNA-binding</keyword>
<keyword id="KW-0820">tRNA-binding</keyword>
<comment type="catalytic activity">
    <reaction evidence="1">
        <text>tRNA(Phe) + L-phenylalanine + ATP = L-phenylalanyl-tRNA(Phe) + AMP + diphosphate + H(+)</text>
        <dbReference type="Rhea" id="RHEA:19413"/>
        <dbReference type="Rhea" id="RHEA-COMP:9668"/>
        <dbReference type="Rhea" id="RHEA-COMP:9699"/>
        <dbReference type="ChEBI" id="CHEBI:15378"/>
        <dbReference type="ChEBI" id="CHEBI:30616"/>
        <dbReference type="ChEBI" id="CHEBI:33019"/>
        <dbReference type="ChEBI" id="CHEBI:58095"/>
        <dbReference type="ChEBI" id="CHEBI:78442"/>
        <dbReference type="ChEBI" id="CHEBI:78531"/>
        <dbReference type="ChEBI" id="CHEBI:456215"/>
        <dbReference type="EC" id="6.1.1.20"/>
    </reaction>
</comment>
<comment type="cofactor">
    <cofactor evidence="1">
        <name>Mg(2+)</name>
        <dbReference type="ChEBI" id="CHEBI:18420"/>
    </cofactor>
    <text evidence="1">Binds 2 magnesium ions per tetramer.</text>
</comment>
<comment type="subunit">
    <text evidence="1">Tetramer of two alpha and two beta subunits.</text>
</comment>
<comment type="subcellular location">
    <subcellularLocation>
        <location>Cytoplasm</location>
    </subcellularLocation>
</comment>
<comment type="similarity">
    <text evidence="1">Belongs to the phenylalanyl-tRNA synthetase beta subunit family. Type 1 subfamily.</text>
</comment>
<evidence type="ECO:0000255" key="1">
    <source>
        <dbReference type="HAMAP-Rule" id="MF_00283"/>
    </source>
</evidence>
<gene>
    <name evidence="1" type="primary">pheT</name>
    <name type="ordered locus">SAV1139</name>
</gene>
<dbReference type="EC" id="6.1.1.20" evidence="1"/>
<dbReference type="EMBL" id="BA000017">
    <property type="protein sequence ID" value="BAB57301.1"/>
    <property type="molecule type" value="Genomic_DNA"/>
</dbReference>
<dbReference type="RefSeq" id="WP_000908969.1">
    <property type="nucleotide sequence ID" value="NC_002758.2"/>
</dbReference>
<dbReference type="SMR" id="P67040"/>
<dbReference type="KEGG" id="sav:SAV1139"/>
<dbReference type="HOGENOM" id="CLU_016891_0_0_9"/>
<dbReference type="PhylomeDB" id="P67040"/>
<dbReference type="Proteomes" id="UP000002481">
    <property type="component" value="Chromosome"/>
</dbReference>
<dbReference type="GO" id="GO:0009328">
    <property type="term" value="C:phenylalanine-tRNA ligase complex"/>
    <property type="evidence" value="ECO:0007669"/>
    <property type="project" value="TreeGrafter"/>
</dbReference>
<dbReference type="GO" id="GO:0005524">
    <property type="term" value="F:ATP binding"/>
    <property type="evidence" value="ECO:0007669"/>
    <property type="project" value="UniProtKB-UniRule"/>
</dbReference>
<dbReference type="GO" id="GO:0140096">
    <property type="term" value="F:catalytic activity, acting on a protein"/>
    <property type="evidence" value="ECO:0007669"/>
    <property type="project" value="UniProtKB-ARBA"/>
</dbReference>
<dbReference type="GO" id="GO:0000287">
    <property type="term" value="F:magnesium ion binding"/>
    <property type="evidence" value="ECO:0007669"/>
    <property type="project" value="UniProtKB-UniRule"/>
</dbReference>
<dbReference type="GO" id="GO:0004826">
    <property type="term" value="F:phenylalanine-tRNA ligase activity"/>
    <property type="evidence" value="ECO:0007669"/>
    <property type="project" value="UniProtKB-UniRule"/>
</dbReference>
<dbReference type="GO" id="GO:0016740">
    <property type="term" value="F:transferase activity"/>
    <property type="evidence" value="ECO:0007669"/>
    <property type="project" value="UniProtKB-ARBA"/>
</dbReference>
<dbReference type="GO" id="GO:0000049">
    <property type="term" value="F:tRNA binding"/>
    <property type="evidence" value="ECO:0007669"/>
    <property type="project" value="UniProtKB-KW"/>
</dbReference>
<dbReference type="GO" id="GO:0006432">
    <property type="term" value="P:phenylalanyl-tRNA aminoacylation"/>
    <property type="evidence" value="ECO:0007669"/>
    <property type="project" value="UniProtKB-UniRule"/>
</dbReference>
<dbReference type="CDD" id="cd00769">
    <property type="entry name" value="PheRS_beta_core"/>
    <property type="match status" value="1"/>
</dbReference>
<dbReference type="CDD" id="cd02796">
    <property type="entry name" value="tRNA_bind_bactPheRS"/>
    <property type="match status" value="1"/>
</dbReference>
<dbReference type="FunFam" id="2.40.50.140:FF:000045">
    <property type="entry name" value="Phenylalanine--tRNA ligase beta subunit"/>
    <property type="match status" value="1"/>
</dbReference>
<dbReference type="FunFam" id="3.30.56.10:FF:000002">
    <property type="entry name" value="Phenylalanine--tRNA ligase beta subunit"/>
    <property type="match status" value="1"/>
</dbReference>
<dbReference type="FunFam" id="3.30.70.380:FF:000001">
    <property type="entry name" value="Phenylalanine--tRNA ligase beta subunit"/>
    <property type="match status" value="1"/>
</dbReference>
<dbReference type="FunFam" id="3.30.930.10:FF:000022">
    <property type="entry name" value="Phenylalanine--tRNA ligase beta subunit"/>
    <property type="match status" value="1"/>
</dbReference>
<dbReference type="FunFam" id="3.50.40.10:FF:000001">
    <property type="entry name" value="Phenylalanine--tRNA ligase beta subunit"/>
    <property type="match status" value="1"/>
</dbReference>
<dbReference type="Gene3D" id="3.30.56.10">
    <property type="match status" value="2"/>
</dbReference>
<dbReference type="Gene3D" id="3.30.930.10">
    <property type="entry name" value="Bira Bifunctional Protein, Domain 2"/>
    <property type="match status" value="1"/>
</dbReference>
<dbReference type="Gene3D" id="3.30.70.380">
    <property type="entry name" value="Ferrodoxin-fold anticodon-binding domain"/>
    <property type="match status" value="1"/>
</dbReference>
<dbReference type="Gene3D" id="2.40.50.140">
    <property type="entry name" value="Nucleic acid-binding proteins"/>
    <property type="match status" value="1"/>
</dbReference>
<dbReference type="Gene3D" id="3.50.40.10">
    <property type="entry name" value="Phenylalanyl-trna Synthetase, Chain B, domain 3"/>
    <property type="match status" value="1"/>
</dbReference>
<dbReference type="HAMAP" id="MF_00283">
    <property type="entry name" value="Phe_tRNA_synth_beta1"/>
    <property type="match status" value="1"/>
</dbReference>
<dbReference type="InterPro" id="IPR045864">
    <property type="entry name" value="aa-tRNA-synth_II/BPL/LPL"/>
</dbReference>
<dbReference type="InterPro" id="IPR005146">
    <property type="entry name" value="B3/B4_tRNA-bd"/>
</dbReference>
<dbReference type="InterPro" id="IPR009061">
    <property type="entry name" value="DNA-bd_dom_put_sf"/>
</dbReference>
<dbReference type="InterPro" id="IPR005121">
    <property type="entry name" value="Fdx_antiC-bd"/>
</dbReference>
<dbReference type="InterPro" id="IPR036690">
    <property type="entry name" value="Fdx_antiC-bd_sf"/>
</dbReference>
<dbReference type="InterPro" id="IPR012340">
    <property type="entry name" value="NA-bd_OB-fold"/>
</dbReference>
<dbReference type="InterPro" id="IPR045060">
    <property type="entry name" value="Phe-tRNA-ligase_IIc_bsu"/>
</dbReference>
<dbReference type="InterPro" id="IPR004532">
    <property type="entry name" value="Phe-tRNA-ligase_IIc_bsu_bact"/>
</dbReference>
<dbReference type="InterPro" id="IPR020825">
    <property type="entry name" value="Phe-tRNA_synthase-like_B3/B4"/>
</dbReference>
<dbReference type="InterPro" id="IPR041616">
    <property type="entry name" value="PheRS_beta_core"/>
</dbReference>
<dbReference type="InterPro" id="IPR002547">
    <property type="entry name" value="tRNA-bd_dom"/>
</dbReference>
<dbReference type="InterPro" id="IPR033714">
    <property type="entry name" value="tRNA_bind_bactPheRS"/>
</dbReference>
<dbReference type="InterPro" id="IPR005147">
    <property type="entry name" value="tRNA_synthase_B5-dom"/>
</dbReference>
<dbReference type="NCBIfam" id="TIGR00472">
    <property type="entry name" value="pheT_bact"/>
    <property type="match status" value="1"/>
</dbReference>
<dbReference type="NCBIfam" id="NF045760">
    <property type="entry name" value="YtpR"/>
    <property type="match status" value="1"/>
</dbReference>
<dbReference type="PANTHER" id="PTHR10947:SF0">
    <property type="entry name" value="PHENYLALANINE--TRNA LIGASE BETA SUBUNIT"/>
    <property type="match status" value="1"/>
</dbReference>
<dbReference type="PANTHER" id="PTHR10947">
    <property type="entry name" value="PHENYLALANYL-TRNA SYNTHETASE BETA CHAIN AND LEUCINE-RICH REPEAT-CONTAINING PROTEIN 47"/>
    <property type="match status" value="1"/>
</dbReference>
<dbReference type="Pfam" id="PF03483">
    <property type="entry name" value="B3_4"/>
    <property type="match status" value="1"/>
</dbReference>
<dbReference type="Pfam" id="PF03484">
    <property type="entry name" value="B5"/>
    <property type="match status" value="1"/>
</dbReference>
<dbReference type="Pfam" id="PF03147">
    <property type="entry name" value="FDX-ACB"/>
    <property type="match status" value="1"/>
</dbReference>
<dbReference type="Pfam" id="PF01588">
    <property type="entry name" value="tRNA_bind"/>
    <property type="match status" value="1"/>
</dbReference>
<dbReference type="Pfam" id="PF17759">
    <property type="entry name" value="tRNA_synthFbeta"/>
    <property type="match status" value="1"/>
</dbReference>
<dbReference type="SMART" id="SM00873">
    <property type="entry name" value="B3_4"/>
    <property type="match status" value="1"/>
</dbReference>
<dbReference type="SMART" id="SM00874">
    <property type="entry name" value="B5"/>
    <property type="match status" value="1"/>
</dbReference>
<dbReference type="SMART" id="SM00896">
    <property type="entry name" value="FDX-ACB"/>
    <property type="match status" value="1"/>
</dbReference>
<dbReference type="SUPFAM" id="SSF54991">
    <property type="entry name" value="Anticodon-binding domain of PheRS"/>
    <property type="match status" value="1"/>
</dbReference>
<dbReference type="SUPFAM" id="SSF55681">
    <property type="entry name" value="Class II aaRS and biotin synthetases"/>
    <property type="match status" value="1"/>
</dbReference>
<dbReference type="SUPFAM" id="SSF50249">
    <property type="entry name" value="Nucleic acid-binding proteins"/>
    <property type="match status" value="1"/>
</dbReference>
<dbReference type="SUPFAM" id="SSF56037">
    <property type="entry name" value="PheT/TilS domain"/>
    <property type="match status" value="1"/>
</dbReference>
<dbReference type="SUPFAM" id="SSF46955">
    <property type="entry name" value="Putative DNA-binding domain"/>
    <property type="match status" value="1"/>
</dbReference>
<dbReference type="PROSITE" id="PS51483">
    <property type="entry name" value="B5"/>
    <property type="match status" value="1"/>
</dbReference>
<dbReference type="PROSITE" id="PS51447">
    <property type="entry name" value="FDX_ACB"/>
    <property type="match status" value="1"/>
</dbReference>
<dbReference type="PROSITE" id="PS50886">
    <property type="entry name" value="TRBD"/>
    <property type="match status" value="1"/>
</dbReference>
<protein>
    <recommendedName>
        <fullName evidence="1">Phenylalanine--tRNA ligase beta subunit</fullName>
        <ecNumber evidence="1">6.1.1.20</ecNumber>
    </recommendedName>
    <alternativeName>
        <fullName evidence="1">Phenylalanyl-tRNA synthetase beta subunit</fullName>
        <shortName evidence="1">PheRS</shortName>
    </alternativeName>
</protein>
<reference key="1">
    <citation type="journal article" date="2001" name="Lancet">
        <title>Whole genome sequencing of meticillin-resistant Staphylococcus aureus.</title>
        <authorList>
            <person name="Kuroda M."/>
            <person name="Ohta T."/>
            <person name="Uchiyama I."/>
            <person name="Baba T."/>
            <person name="Yuzawa H."/>
            <person name="Kobayashi I."/>
            <person name="Cui L."/>
            <person name="Oguchi A."/>
            <person name="Aoki K."/>
            <person name="Nagai Y."/>
            <person name="Lian J.-Q."/>
            <person name="Ito T."/>
            <person name="Kanamori M."/>
            <person name="Matsumaru H."/>
            <person name="Maruyama A."/>
            <person name="Murakami H."/>
            <person name="Hosoyama A."/>
            <person name="Mizutani-Ui Y."/>
            <person name="Takahashi N.K."/>
            <person name="Sawano T."/>
            <person name="Inoue R."/>
            <person name="Kaito C."/>
            <person name="Sekimizu K."/>
            <person name="Hirakawa H."/>
            <person name="Kuhara S."/>
            <person name="Goto S."/>
            <person name="Yabuzaki J."/>
            <person name="Kanehisa M."/>
            <person name="Yamashita A."/>
            <person name="Oshima K."/>
            <person name="Furuya K."/>
            <person name="Yoshino C."/>
            <person name="Shiba T."/>
            <person name="Hattori M."/>
            <person name="Ogasawara N."/>
            <person name="Hayashi H."/>
            <person name="Hiramatsu K."/>
        </authorList>
    </citation>
    <scope>NUCLEOTIDE SEQUENCE [LARGE SCALE GENOMIC DNA]</scope>
    <source>
        <strain>Mu50 / ATCC 700699</strain>
    </source>
</reference>
<sequence>MLISNEWLKEYVTIDDSVSDLAERITRTGIEVDDLIDYTKDIKNLVVGFVKSKEKHPDADKLNVCQVDIGEDEPVQIVCGAPNVDAGQYVIVAKVGGRLPGGIKIKRAKLRGERSEGMICSLQEIGISSNYIPKSFESGIYVFSESQVPGTDALQALYLDDQVMEFDLTPNRADALSMIGTAYEVAALYNTKMTKPETTSNELELSANDELTVTIENEDKVPYYSARVVHDVTIEPSPIWMQARLIKAGIRPINNVVDISNYVLLEYGQPLHMFDQDAIGSQQIVVRQANEGEKMTTLDDTERELLTSDIVITNGQTPIALAGVMGGDFSEVKEQTSNIVIEGAIFDPVSIRHTSRRLNLRSESSSRFEKGIATEFVDEAVDRACYLLQTYANGKVLKDRVSSGELGAFITPIDITADKINRTIGFDLSQNDIVTIFNQLGFDTEINDDVITVLVPSRRKDITIKEDLIEEVARIYGYDDIPSTLPVFDKVTSGQLTDRQYKTRMVKEVLEGAGLDQAITYSLVSKEDATAFSMQQRQTIDLLMPMSEAHASLRQSLLPHLIEAASYNVARKNKDVKLFEIGNVFFANGEGELPDQVEYLSGILTGDYVVNQWQGKKETVDFYLAKGVVDRVSEKLNLEFSYRRADIDGLHPGRTAEILLENKVVGFIGELHPTLAADNDLKRTYVFELNFDALMAVSVGYINYQPIPRFPGMSRDIALEVDQNIPAADLLSTIHAHGGNILKDTLVFDVYQGEHLEKGKKSIAIRLNYLDTEETLTDERVSKVQAEIEAALIEQGAVIR</sequence>
<organism>
    <name type="scientific">Staphylococcus aureus (strain Mu50 / ATCC 700699)</name>
    <dbReference type="NCBI Taxonomy" id="158878"/>
    <lineage>
        <taxon>Bacteria</taxon>
        <taxon>Bacillati</taxon>
        <taxon>Bacillota</taxon>
        <taxon>Bacilli</taxon>
        <taxon>Bacillales</taxon>
        <taxon>Staphylococcaceae</taxon>
        <taxon>Staphylococcus</taxon>
    </lineage>
</organism>
<proteinExistence type="inferred from homology"/>
<feature type="chain" id="PRO_0000126949" description="Phenylalanine--tRNA ligase beta subunit">
    <location>
        <begin position="1"/>
        <end position="800"/>
    </location>
</feature>
<feature type="domain" description="tRNA-binding" evidence="1">
    <location>
        <begin position="39"/>
        <end position="154"/>
    </location>
</feature>
<feature type="domain" description="B5" evidence="1">
    <location>
        <begin position="408"/>
        <end position="483"/>
    </location>
</feature>
<feature type="domain" description="FDX-ACB" evidence="1">
    <location>
        <begin position="708"/>
        <end position="800"/>
    </location>
</feature>
<feature type="binding site" evidence="1">
    <location>
        <position position="461"/>
    </location>
    <ligand>
        <name>Mg(2+)</name>
        <dbReference type="ChEBI" id="CHEBI:18420"/>
        <note>shared with alpha subunit</note>
    </ligand>
</feature>
<feature type="binding site" evidence="1">
    <location>
        <position position="467"/>
    </location>
    <ligand>
        <name>Mg(2+)</name>
        <dbReference type="ChEBI" id="CHEBI:18420"/>
        <note>shared with alpha subunit</note>
    </ligand>
</feature>
<feature type="binding site" evidence="1">
    <location>
        <position position="470"/>
    </location>
    <ligand>
        <name>Mg(2+)</name>
        <dbReference type="ChEBI" id="CHEBI:18420"/>
        <note>shared with alpha subunit</note>
    </ligand>
</feature>
<feature type="binding site" evidence="1">
    <location>
        <position position="471"/>
    </location>
    <ligand>
        <name>Mg(2+)</name>
        <dbReference type="ChEBI" id="CHEBI:18420"/>
        <note>shared with alpha subunit</note>
    </ligand>
</feature>
<accession>P67040</accession>
<accession>Q99UW6</accession>